<keyword id="KW-1185">Reference proteome</keyword>
<dbReference type="EMBL" id="AL590842">
    <property type="protein sequence ID" value="CAL21635.1"/>
    <property type="molecule type" value="Genomic_DNA"/>
</dbReference>
<dbReference type="EMBL" id="AE009952">
    <property type="protein sequence ID" value="AAM85021.1"/>
    <property type="molecule type" value="Genomic_DNA"/>
</dbReference>
<dbReference type="EMBL" id="AE017042">
    <property type="protein sequence ID" value="AAS62848.1"/>
    <property type="molecule type" value="Genomic_DNA"/>
</dbReference>
<dbReference type="PIR" id="AH0368">
    <property type="entry name" value="AH0368"/>
</dbReference>
<dbReference type="RefSeq" id="WP_002208527.1">
    <property type="nucleotide sequence ID" value="NZ_WUCM01000010.1"/>
</dbReference>
<dbReference type="RefSeq" id="YP_002347953.1">
    <property type="nucleotide sequence ID" value="NC_003143.1"/>
</dbReference>
<dbReference type="STRING" id="214092.YPO3033"/>
<dbReference type="PaxDb" id="214092-YPO3033"/>
<dbReference type="DNASU" id="1146397"/>
<dbReference type="EnsemblBacteria" id="AAS62848">
    <property type="protein sequence ID" value="AAS62848"/>
    <property type="gene ID" value="YP_2656"/>
</dbReference>
<dbReference type="KEGG" id="ype:YPO3033"/>
<dbReference type="KEGG" id="ypk:y1450"/>
<dbReference type="KEGG" id="ypm:YP_2656"/>
<dbReference type="PATRIC" id="fig|1028802.3.peg.1638"/>
<dbReference type="eggNOG" id="COG1671">
    <property type="taxonomic scope" value="Bacteria"/>
</dbReference>
<dbReference type="HOGENOM" id="CLU_106619_1_0_6"/>
<dbReference type="OMA" id="CPVKDEI"/>
<dbReference type="OrthoDB" id="9798918at2"/>
<dbReference type="Proteomes" id="UP000000815">
    <property type="component" value="Chromosome"/>
</dbReference>
<dbReference type="Proteomes" id="UP000001019">
    <property type="component" value="Chromosome"/>
</dbReference>
<dbReference type="Proteomes" id="UP000002490">
    <property type="component" value="Chromosome"/>
</dbReference>
<dbReference type="CDD" id="cd18720">
    <property type="entry name" value="PIN_YqxD-like"/>
    <property type="match status" value="1"/>
</dbReference>
<dbReference type="HAMAP" id="MF_00489">
    <property type="entry name" value="UPF0178"/>
    <property type="match status" value="1"/>
</dbReference>
<dbReference type="InterPro" id="IPR003791">
    <property type="entry name" value="UPF0178"/>
</dbReference>
<dbReference type="NCBIfam" id="NF001095">
    <property type="entry name" value="PRK00124.1"/>
    <property type="match status" value="1"/>
</dbReference>
<dbReference type="PANTHER" id="PTHR35146">
    <property type="entry name" value="UPF0178 PROTEIN YAII"/>
    <property type="match status" value="1"/>
</dbReference>
<dbReference type="PANTHER" id="PTHR35146:SF1">
    <property type="entry name" value="UPF0178 PROTEIN YAII"/>
    <property type="match status" value="1"/>
</dbReference>
<dbReference type="Pfam" id="PF02639">
    <property type="entry name" value="DUF188"/>
    <property type="match status" value="1"/>
</dbReference>
<comment type="similarity">
    <text evidence="1">Belongs to the UPF0178 family.</text>
</comment>
<name>Y3033_YERPE</name>
<sequence>MQIWVDADACPNVIKEVLFRAADRTGMMVTLVANQPLKTPPSKFIRTVQVASGFDVADNEIVQRVEKNDLVITADIPLAAEVIEKGGIALNPRGERYTPDTIRERLNMRDFMDTMRASGIQTGGPNTLNQRDRQQFANELDKWLQQARNQAK</sequence>
<evidence type="ECO:0000255" key="1">
    <source>
        <dbReference type="HAMAP-Rule" id="MF_00489"/>
    </source>
</evidence>
<accession>Q8ZCF8</accession>
<accession>Q0WCN5</accession>
<organism>
    <name type="scientific">Yersinia pestis</name>
    <dbReference type="NCBI Taxonomy" id="632"/>
    <lineage>
        <taxon>Bacteria</taxon>
        <taxon>Pseudomonadati</taxon>
        <taxon>Pseudomonadota</taxon>
        <taxon>Gammaproteobacteria</taxon>
        <taxon>Enterobacterales</taxon>
        <taxon>Yersiniaceae</taxon>
        <taxon>Yersinia</taxon>
    </lineage>
</organism>
<protein>
    <recommendedName>
        <fullName evidence="1">UPF0178 protein YPO3033/y1450/YP_2656</fullName>
    </recommendedName>
</protein>
<gene>
    <name type="ordered locus">YPO3033</name>
    <name type="ordered locus">y1450</name>
    <name type="ordered locus">YP_2656</name>
</gene>
<reference key="1">
    <citation type="journal article" date="2001" name="Nature">
        <title>Genome sequence of Yersinia pestis, the causative agent of plague.</title>
        <authorList>
            <person name="Parkhill J."/>
            <person name="Wren B.W."/>
            <person name="Thomson N.R."/>
            <person name="Titball R.W."/>
            <person name="Holden M.T.G."/>
            <person name="Prentice M.B."/>
            <person name="Sebaihia M."/>
            <person name="James K.D."/>
            <person name="Churcher C.M."/>
            <person name="Mungall K.L."/>
            <person name="Baker S."/>
            <person name="Basham D."/>
            <person name="Bentley S.D."/>
            <person name="Brooks K."/>
            <person name="Cerdeno-Tarraga A.-M."/>
            <person name="Chillingworth T."/>
            <person name="Cronin A."/>
            <person name="Davies R.M."/>
            <person name="Davis P."/>
            <person name="Dougan G."/>
            <person name="Feltwell T."/>
            <person name="Hamlin N."/>
            <person name="Holroyd S."/>
            <person name="Jagels K."/>
            <person name="Karlyshev A.V."/>
            <person name="Leather S."/>
            <person name="Moule S."/>
            <person name="Oyston P.C.F."/>
            <person name="Quail M.A."/>
            <person name="Rutherford K.M."/>
            <person name="Simmonds M."/>
            <person name="Skelton J."/>
            <person name="Stevens K."/>
            <person name="Whitehead S."/>
            <person name="Barrell B.G."/>
        </authorList>
    </citation>
    <scope>NUCLEOTIDE SEQUENCE [LARGE SCALE GENOMIC DNA]</scope>
    <source>
        <strain>CO-92 / Biovar Orientalis</strain>
    </source>
</reference>
<reference key="2">
    <citation type="journal article" date="2002" name="J. Bacteriol.">
        <title>Genome sequence of Yersinia pestis KIM.</title>
        <authorList>
            <person name="Deng W."/>
            <person name="Burland V."/>
            <person name="Plunkett G. III"/>
            <person name="Boutin A."/>
            <person name="Mayhew G.F."/>
            <person name="Liss P."/>
            <person name="Perna N.T."/>
            <person name="Rose D.J."/>
            <person name="Mau B."/>
            <person name="Zhou S."/>
            <person name="Schwartz D.C."/>
            <person name="Fetherston J.D."/>
            <person name="Lindler L.E."/>
            <person name="Brubaker R.R."/>
            <person name="Plano G.V."/>
            <person name="Straley S.C."/>
            <person name="McDonough K.A."/>
            <person name="Nilles M.L."/>
            <person name="Matson J.S."/>
            <person name="Blattner F.R."/>
            <person name="Perry R.D."/>
        </authorList>
    </citation>
    <scope>NUCLEOTIDE SEQUENCE [LARGE SCALE GENOMIC DNA]</scope>
    <source>
        <strain>KIM10+ / Biovar Mediaevalis</strain>
    </source>
</reference>
<reference key="3">
    <citation type="journal article" date="2004" name="DNA Res.">
        <title>Complete genome sequence of Yersinia pestis strain 91001, an isolate avirulent to humans.</title>
        <authorList>
            <person name="Song Y."/>
            <person name="Tong Z."/>
            <person name="Wang J."/>
            <person name="Wang L."/>
            <person name="Guo Z."/>
            <person name="Han Y."/>
            <person name="Zhang J."/>
            <person name="Pei D."/>
            <person name="Zhou D."/>
            <person name="Qin H."/>
            <person name="Pang X."/>
            <person name="Han Y."/>
            <person name="Zhai J."/>
            <person name="Li M."/>
            <person name="Cui B."/>
            <person name="Qi Z."/>
            <person name="Jin L."/>
            <person name="Dai R."/>
            <person name="Chen F."/>
            <person name="Li S."/>
            <person name="Ye C."/>
            <person name="Du Z."/>
            <person name="Lin W."/>
            <person name="Wang J."/>
            <person name="Yu J."/>
            <person name="Yang H."/>
            <person name="Wang J."/>
            <person name="Huang P."/>
            <person name="Yang R."/>
        </authorList>
    </citation>
    <scope>NUCLEOTIDE SEQUENCE [LARGE SCALE GENOMIC DNA]</scope>
    <source>
        <strain>91001 / Biovar Mediaevalis</strain>
    </source>
</reference>
<proteinExistence type="inferred from homology"/>
<feature type="chain" id="PRO_0000176027" description="UPF0178 protein YPO3033/y1450/YP_2656">
    <location>
        <begin position="1"/>
        <end position="152"/>
    </location>
</feature>